<reference key="1">
    <citation type="journal article" date="2019" name="Org. Lett.">
        <title>The discovery of fungal polyene macrolides via a postgenomic approach reveals a polyketide macrocyclization by trans-acting thioesterase in fungi.</title>
        <authorList>
            <person name="Morishita Y."/>
            <person name="Zhang H."/>
            <person name="Taniguchi T."/>
            <person name="Mori K."/>
            <person name="Asai T."/>
        </authorList>
    </citation>
    <scope>NUCLEOTIDE SEQUENCE [GENOMIC DNA]</scope>
    <scope>FUNCTION</scope>
    <scope>CATALYTIC ACTIVITY</scope>
    <scope>PATHWAY</scope>
    <source>
        <strain>Kemushi-1</strain>
    </source>
</reference>
<comment type="function">
    <text evidence="1">Thiohydrolase; part of the gene cluster that mediates the biosynthesis of phaeospelide A, a fungal polyene macrolide with a 34-membered macrolactone ring and an all-trans conjugated hexaene structure (PubMed:31180682). The HR-PKS ApmlA uses acetyl-CoA and malonyl-CoA as its starter and extender units, respectively, and provides the large carbon framework in phaeospelide via 16 cycles of polyketide chain elongation, which is the largest number identified in fungal iterative PKSs thus far (PubMed:31180682). During round 1, the KR domain reduces beta -ketone to an L-oriented hydroxy group, while during later rounds, it provides hydroxy groups in the D-configuration (PubMed:31180682). The characteristic conjugated hexaene moiety is built during the later rounds (10-15), when the KR and DH domains are at work but ER is off (PubMed:31180682). Phylogenetic analysis of the DH domain suggests that a polyene formation is programmed in the DH domain (PubMed:31180682). Finally, the mature ACP-tethered carbon chain is transferred to the serine residue of the thiohydrolase apmlB, followed by intramolecular macrolactonization, generating phaeospelide A (PubMed:31180682). When one elongation cycle during rounds 7-9 is skipped, phaeospelide B is biosynthesized instead (PubMed:31180682).</text>
</comment>
<comment type="similarity">
    <text evidence="3">Belongs to the polyketide transferase af380 family.</text>
</comment>
<sequence length="307" mass="34413">MGLSEKVEFKTLDGLVLRGFLYSARAKGPAIVMTPGFNFPVSLLYHEVALGFQAAGITALVYDPRSVGRSDGLPRSDINPAKQSEDFSDAITFLKTKPVVDPKRIALWGYSLSAAAALMAAGLDPRVKLVVAVCPAPVPYNFEAPGKRRKYLDLAIRDRESQARGKEPFYVQYIGDSEETALFDYRKQRGMEELEYDEVVENLTKIAPGFRNEVTIQTLRRLGSWSFADVPQRVGPTPVLQVFAVHEELEHIRKTQEAIWAGLTGPKERHTEDRGHMDVLTPDGHRFAHLVKVQVDFVLKNFAQRMR</sequence>
<gene>
    <name evidence="2" type="primary">apmlB</name>
</gene>
<keyword id="KW-0378">Hydrolase</keyword>
<evidence type="ECO:0000269" key="1">
    <source>
    </source>
</evidence>
<evidence type="ECO:0000303" key="2">
    <source>
    </source>
</evidence>
<evidence type="ECO:0000305" key="3"/>
<organism>
    <name type="scientific">Arthrinium phaeospermum</name>
    <name type="common">Gymnosporium phaeospermum</name>
    <dbReference type="NCBI Taxonomy" id="112178"/>
    <lineage>
        <taxon>Eukaryota</taxon>
        <taxon>Fungi</taxon>
        <taxon>Dikarya</taxon>
        <taxon>Ascomycota</taxon>
        <taxon>Pezizomycotina</taxon>
        <taxon>Sordariomycetes</taxon>
        <taxon>Xylariomycetidae</taxon>
        <taxon>Amphisphaeriales</taxon>
        <taxon>Apiosporaceae</taxon>
        <taxon>Arthrinium</taxon>
    </lineage>
</organism>
<feature type="chain" id="PRO_0000447827" description="Thiohydrolase apmlB">
    <location>
        <begin position="1"/>
        <end position="307"/>
    </location>
</feature>
<dbReference type="EC" id="3.1.-.-" evidence="1"/>
<dbReference type="SMR" id="P0CU85"/>
<dbReference type="ESTHER" id="artpe-apmlb">
    <property type="family name" value="Thiohydrolase"/>
</dbReference>
<dbReference type="GO" id="GO:0016787">
    <property type="term" value="F:hydrolase activity"/>
    <property type="evidence" value="ECO:0007669"/>
    <property type="project" value="UniProtKB-KW"/>
</dbReference>
<dbReference type="Gene3D" id="1.10.10.800">
    <property type="match status" value="1"/>
</dbReference>
<dbReference type="Gene3D" id="3.40.50.1820">
    <property type="entry name" value="alpha/beta hydrolase"/>
    <property type="match status" value="1"/>
</dbReference>
<dbReference type="InterPro" id="IPR000073">
    <property type="entry name" value="AB_hydrolase_1"/>
</dbReference>
<dbReference type="InterPro" id="IPR029058">
    <property type="entry name" value="AB_hydrolase_fold"/>
</dbReference>
<dbReference type="InterPro" id="IPR051411">
    <property type="entry name" value="Polyketide_trans_af380"/>
</dbReference>
<dbReference type="PANTHER" id="PTHR47751:SF2">
    <property type="entry name" value="DLTD N-TERMINAL DOMAIN PROTEIN (AFU_ORTHOLOGUE AFUA_8G00380)-RELATED"/>
    <property type="match status" value="1"/>
</dbReference>
<dbReference type="PANTHER" id="PTHR47751">
    <property type="entry name" value="SUPERFAMILY HYDROLASE, PUTATIVE (AFU_ORTHOLOGUE AFUA_2G16580)-RELATED"/>
    <property type="match status" value="1"/>
</dbReference>
<dbReference type="Pfam" id="PF12697">
    <property type="entry name" value="Abhydrolase_6"/>
    <property type="match status" value="1"/>
</dbReference>
<dbReference type="SUPFAM" id="SSF53474">
    <property type="entry name" value="alpha/beta-Hydrolases"/>
    <property type="match status" value="1"/>
</dbReference>
<protein>
    <recommendedName>
        <fullName evidence="2">Thiohydrolase apmlB</fullName>
        <shortName evidence="2">TH</shortName>
        <ecNumber evidence="1">3.1.-.-</ecNumber>
    </recommendedName>
    <alternativeName>
        <fullName evidence="2">Phaeospelide A biosynthesis cluster protein apmlB</fullName>
    </alternativeName>
</protein>
<proteinExistence type="evidence at protein level"/>
<name>APMLB_ARTPE</name>
<accession>P0CU85</accession>